<accession>P53044</accession>
<accession>D6VUI5</accession>
<accession>Q45U36</accession>
<reference key="1">
    <citation type="journal article" date="1995" name="J. Biol. Chem.">
        <title>A proteolytic pathway that recognizes ubiquitin as a degradation signal.</title>
        <authorList>
            <person name="Johnson E.S."/>
            <person name="Ma P.C.M."/>
            <person name="Ota I.M."/>
            <person name="Varshavsky A."/>
        </authorList>
    </citation>
    <scope>NUCLEOTIDE SEQUENCE [GENOMIC DNA]</scope>
    <scope>MUTAGENESIS OF VAL-94</scope>
    <source>
        <strain>ATCC 204508 / S288c</strain>
    </source>
</reference>
<reference key="2">
    <citation type="journal article" date="1997" name="Mol. Gen. Genet.">
        <title>The Uba2 and Ufd1 proteins of Saccharomyces cerevisiae interact with poly(A) polymerase and affect the polyadenylation activity of cell extracts.</title>
        <authorList>
            <person name="del Olmo M."/>
            <person name="Mizrahi N."/>
            <person name="Gross S."/>
            <person name="Moore C.L."/>
        </authorList>
    </citation>
    <scope>NUCLEOTIDE SEQUENCE [GENOMIC DNA]</scope>
    <source>
        <strain>ATCC 200060 / W303</strain>
    </source>
</reference>
<reference key="3">
    <citation type="journal article" date="2005" name="Nat. Genet.">
        <title>Quantitative trait loci mapped to single-nucleotide resolution in yeast.</title>
        <authorList>
            <person name="Deutschbauer A.M."/>
            <person name="Davis R.W."/>
        </authorList>
    </citation>
    <scope>NUCLEOTIDE SEQUENCE [GENOMIC DNA]</scope>
    <source>
        <strain>SK1</strain>
    </source>
</reference>
<reference key="4">
    <citation type="journal article" date="1997" name="Nature">
        <title>The nucleotide sequence of Saccharomyces cerevisiae chromosome VII.</title>
        <authorList>
            <person name="Tettelin H."/>
            <person name="Agostoni-Carbone M.L."/>
            <person name="Albermann K."/>
            <person name="Albers M."/>
            <person name="Arroyo J."/>
            <person name="Backes U."/>
            <person name="Barreiros T."/>
            <person name="Bertani I."/>
            <person name="Bjourson A.J."/>
            <person name="Brueckner M."/>
            <person name="Bruschi C.V."/>
            <person name="Carignani G."/>
            <person name="Castagnoli L."/>
            <person name="Cerdan E."/>
            <person name="Clemente M.L."/>
            <person name="Coblenz A."/>
            <person name="Coglievina M."/>
            <person name="Coissac E."/>
            <person name="Defoor E."/>
            <person name="Del Bino S."/>
            <person name="Delius H."/>
            <person name="Delneri D."/>
            <person name="de Wergifosse P."/>
            <person name="Dujon B."/>
            <person name="Durand P."/>
            <person name="Entian K.-D."/>
            <person name="Eraso P."/>
            <person name="Escribano V."/>
            <person name="Fabiani L."/>
            <person name="Fartmann B."/>
            <person name="Feroli F."/>
            <person name="Feuermann M."/>
            <person name="Frontali L."/>
            <person name="Garcia-Gonzalez M."/>
            <person name="Garcia-Saez M.I."/>
            <person name="Goffeau A."/>
            <person name="Guerreiro P."/>
            <person name="Hani J."/>
            <person name="Hansen M."/>
            <person name="Hebling U."/>
            <person name="Hernandez K."/>
            <person name="Heumann K."/>
            <person name="Hilger F."/>
            <person name="Hofmann B."/>
            <person name="Indge K.J."/>
            <person name="James C.M."/>
            <person name="Klima R."/>
            <person name="Koetter P."/>
            <person name="Kramer B."/>
            <person name="Kramer W."/>
            <person name="Lauquin G."/>
            <person name="Leuther H."/>
            <person name="Louis E.J."/>
            <person name="Maillier E."/>
            <person name="Marconi A."/>
            <person name="Martegani E."/>
            <person name="Mazon M.J."/>
            <person name="Mazzoni C."/>
            <person name="McReynolds A.D.K."/>
            <person name="Melchioretto P."/>
            <person name="Mewes H.-W."/>
            <person name="Minenkova O."/>
            <person name="Mueller-Auer S."/>
            <person name="Nawrocki A."/>
            <person name="Netter P."/>
            <person name="Neu R."/>
            <person name="Nombela C."/>
            <person name="Oliver S.G."/>
            <person name="Panzeri L."/>
            <person name="Paoluzi S."/>
            <person name="Plevani P."/>
            <person name="Portetelle D."/>
            <person name="Portillo F."/>
            <person name="Potier S."/>
            <person name="Purnelle B."/>
            <person name="Rieger M."/>
            <person name="Riles L."/>
            <person name="Rinaldi T."/>
            <person name="Robben J."/>
            <person name="Rodrigues-Pousada C."/>
            <person name="Rodriguez-Belmonte E."/>
            <person name="Rodriguez-Torres A.M."/>
            <person name="Rose M."/>
            <person name="Ruzzi M."/>
            <person name="Saliola M."/>
            <person name="Sanchez-Perez M."/>
            <person name="Schaefer B."/>
            <person name="Schaefer M."/>
            <person name="Scharfe M."/>
            <person name="Schmidheini T."/>
            <person name="Schreer A."/>
            <person name="Skala J."/>
            <person name="Souciet J.-L."/>
            <person name="Steensma H.Y."/>
            <person name="Talla E."/>
            <person name="Thierry A."/>
            <person name="Vandenbol M."/>
            <person name="van der Aart Q.J.M."/>
            <person name="Van Dyck L."/>
            <person name="Vanoni M."/>
            <person name="Verhasselt P."/>
            <person name="Voet M."/>
            <person name="Volckaert G."/>
            <person name="Wambutt R."/>
            <person name="Watson M.D."/>
            <person name="Weber N."/>
            <person name="Wedler E."/>
            <person name="Wedler H."/>
            <person name="Wipfli P."/>
            <person name="Wolf K."/>
            <person name="Wright L.F."/>
            <person name="Zaccaria P."/>
            <person name="Zimmermann M."/>
            <person name="Zollner A."/>
            <person name="Kleine K."/>
        </authorList>
    </citation>
    <scope>NUCLEOTIDE SEQUENCE [LARGE SCALE GENOMIC DNA]</scope>
    <source>
        <strain>ATCC 204508 / S288c</strain>
    </source>
</reference>
<reference key="5">
    <citation type="journal article" date="2014" name="G3 (Bethesda)">
        <title>The reference genome sequence of Saccharomyces cerevisiae: Then and now.</title>
        <authorList>
            <person name="Engel S.R."/>
            <person name="Dietrich F.S."/>
            <person name="Fisk D.G."/>
            <person name="Binkley G."/>
            <person name="Balakrishnan R."/>
            <person name="Costanzo M.C."/>
            <person name="Dwight S.S."/>
            <person name="Hitz B.C."/>
            <person name="Karra K."/>
            <person name="Nash R.S."/>
            <person name="Weng S."/>
            <person name="Wong E.D."/>
            <person name="Lloyd P."/>
            <person name="Skrzypek M.S."/>
            <person name="Miyasato S.R."/>
            <person name="Simison M."/>
            <person name="Cherry J.M."/>
        </authorList>
    </citation>
    <scope>GENOME REANNOTATION</scope>
    <source>
        <strain>ATCC 204508 / S288c</strain>
    </source>
</reference>
<reference key="6">
    <citation type="journal article" date="2007" name="Genome Res.">
        <title>Approaching a complete repository of sequence-verified protein-encoding clones for Saccharomyces cerevisiae.</title>
        <authorList>
            <person name="Hu Y."/>
            <person name="Rolfs A."/>
            <person name="Bhullar B."/>
            <person name="Murthy T.V.S."/>
            <person name="Zhu C."/>
            <person name="Berger M.F."/>
            <person name="Camargo A.A."/>
            <person name="Kelley F."/>
            <person name="McCarron S."/>
            <person name="Jepson D."/>
            <person name="Richardson A."/>
            <person name="Raphael J."/>
            <person name="Moreira D."/>
            <person name="Taycher E."/>
            <person name="Zuo D."/>
            <person name="Mohr S."/>
            <person name="Kane M.F."/>
            <person name="Williamson J."/>
            <person name="Simpson A.J.G."/>
            <person name="Bulyk M.L."/>
            <person name="Harlow E."/>
            <person name="Marsischky G."/>
            <person name="Kolodner R.D."/>
            <person name="LaBaer J."/>
        </authorList>
    </citation>
    <scope>NUCLEOTIDE SEQUENCE [GENOMIC DNA]</scope>
    <source>
        <strain>ATCC 204508 / S288c</strain>
    </source>
</reference>
<reference key="7">
    <citation type="journal article" date="2001" name="Cell">
        <title>Mobilization of processed, membrane-tethered SPT23 transcription factor by CDC48(UFD1/NPL4), a ubiquitin-selective chaperone.</title>
        <authorList>
            <person name="Rape M."/>
            <person name="Hoppe T."/>
            <person name="Gorr I."/>
            <person name="Kalocay M."/>
            <person name="Richly H."/>
            <person name="Jentsch S."/>
        </authorList>
    </citation>
    <scope>FUNCTION</scope>
    <scope>INTERACTION WITH NPL4</scope>
    <scope>SUBCELLULAR LOCATION</scope>
</reference>
<reference key="8">
    <citation type="journal article" date="2001" name="Mol. Biol. Cell">
        <title>The conserved npl4 protein complex mediates proteasome-dependent membrane-bound transcription factor activation.</title>
        <authorList>
            <person name="Hitchcock A.L."/>
            <person name="Krebber H."/>
            <person name="Frietze S."/>
            <person name="Lin A."/>
            <person name="Latterich M."/>
            <person name="Silver P.A."/>
        </authorList>
    </citation>
    <scope>INTERACTION WITH NPL4</scope>
</reference>
<reference key="9">
    <citation type="journal article" date="2001" name="Nature">
        <title>The AAA ATPase Cdc48/p97 and its partners transport proteins from the ER into the cytosol.</title>
        <authorList>
            <person name="Ye Y."/>
            <person name="Meyer H.H."/>
            <person name="Rapoport T.A."/>
        </authorList>
    </citation>
    <scope>FUNCTION</scope>
</reference>
<reference key="10">
    <citation type="journal article" date="2002" name="EMBO J.">
        <title>Role of the ubiquitin-selective CDC48(UFD1/NPL4) chaperone (segregase) in ERAD of OLE1 and other substrates.</title>
        <authorList>
            <person name="Braun S."/>
            <person name="Matuschewski K."/>
            <person name="Rape M."/>
            <person name="Thoms S."/>
            <person name="Jentsch S."/>
        </authorList>
    </citation>
    <scope>FUNCTION</scope>
</reference>
<reference key="11">
    <citation type="journal article" date="2003" name="Nature">
        <title>Global analysis of protein expression in yeast.</title>
        <authorList>
            <person name="Ghaemmaghami S."/>
            <person name="Huh W.-K."/>
            <person name="Bower K."/>
            <person name="Howson R.W."/>
            <person name="Belle A."/>
            <person name="Dephoure N."/>
            <person name="O'Shea E.K."/>
            <person name="Weissman J.S."/>
        </authorList>
    </citation>
    <scope>LEVEL OF PROTEIN EXPRESSION [LARGE SCALE ANALYSIS]</scope>
</reference>
<reference key="12">
    <citation type="journal article" date="2006" name="Cell">
        <title>Distinct ubiquitin-ligase complexes define convergent pathways for the degradation of ER proteins.</title>
        <authorList>
            <person name="Carvalho P."/>
            <person name="Goder V."/>
            <person name="Rapoport T.A."/>
        </authorList>
    </citation>
    <scope>IDENTIFICATION IN CDC48-NPL4-UFD1 ATPASE COMPLEX</scope>
    <scope>INTERACTION WITH HRD1 COMPLEX</scope>
</reference>
<reference key="13">
    <citation type="journal article" date="2007" name="J. Proteome Res.">
        <title>Large-scale phosphorylation analysis of alpha-factor-arrested Saccharomyces cerevisiae.</title>
        <authorList>
            <person name="Li X."/>
            <person name="Gerber S.A."/>
            <person name="Rudner A.D."/>
            <person name="Beausoleil S.A."/>
            <person name="Haas W."/>
            <person name="Villen J."/>
            <person name="Elias J.E."/>
            <person name="Gygi S.P."/>
        </authorList>
    </citation>
    <scope>PHOSPHORYLATION [LARGE SCALE ANALYSIS] AT SER-354</scope>
    <scope>IDENTIFICATION BY MASS SPECTROMETRY [LARGE SCALE ANALYSIS]</scope>
    <source>
        <strain>ADR376</strain>
    </source>
</reference>
<reference key="14">
    <citation type="journal article" date="2008" name="Mol. Cell. Proteomics">
        <title>A multidimensional chromatography technology for in-depth phosphoproteome analysis.</title>
        <authorList>
            <person name="Albuquerque C.P."/>
            <person name="Smolka M.B."/>
            <person name="Payne S.H."/>
            <person name="Bafna V."/>
            <person name="Eng J."/>
            <person name="Zhou H."/>
        </authorList>
    </citation>
    <scope>PHOSPHORYLATION [LARGE SCALE ANALYSIS] AT SER-354</scope>
    <scope>IDENTIFICATION BY MASS SPECTROMETRY [LARGE SCALE ANALYSIS]</scope>
</reference>
<reference key="15">
    <citation type="journal article" date="2009" name="Science">
        <title>Global analysis of Cdk1 substrate phosphorylation sites provides insights into evolution.</title>
        <authorList>
            <person name="Holt L.J."/>
            <person name="Tuch B.B."/>
            <person name="Villen J."/>
            <person name="Johnson A.D."/>
            <person name="Gygi S.P."/>
            <person name="Morgan D.O."/>
        </authorList>
    </citation>
    <scope>PHOSPHORYLATION [LARGE SCALE ANALYSIS] AT SER-354</scope>
    <scope>IDENTIFICATION BY MASS SPECTROMETRY [LARGE SCALE ANALYSIS]</scope>
</reference>
<reference key="16">
    <citation type="journal article" date="2005" name="Structure">
        <title>Ufd1 exhibits the AAA-ATPase fold with two distinct ubiquitin interaction sites.</title>
        <authorList>
            <person name="Park S."/>
            <person name="Isaacson R."/>
            <person name="Kim H.T."/>
            <person name="Silver P.A."/>
            <person name="Wagner G."/>
        </authorList>
    </citation>
    <scope>STRUCTURE BY NMR OF 1-208</scope>
    <scope>FUNCTION</scope>
    <scope>UBIQUITINATION</scope>
</reference>
<reference key="17">
    <citation type="journal article" date="2006" name="Mol. Cell">
        <title>Functional division of substrate processing cofactors of the ubiquitin-selective Cdc48 chaperone.</title>
        <authorList>
            <person name="Rumpf S."/>
            <person name="Jentsch S."/>
        </authorList>
    </citation>
    <scope>IDENTIFICATION IN A COMPLEX WITH NPL4; DOA1; CDC48; OTU1 AND SHP1</scope>
</reference>
<sequence>MFSGFSSFGGGNGFVNMPQTFEEFFRCYPIAMMNDRIRKDDANFGGKIFLPPSALSKLSMLNIRYPMLFKLTANETGRVTHGGVLEFIAEEGRVYLPQWMMETLGIQPGSLLQISSTDVPLGQFVKLEPQSVDFLDISDPKAVLENVLRNFSTLTVDDVIEISYNGKTFKIKILEVKPESSSKSICVIETDLVTDFAPPVGYVEPDYKALKAQQDKEKKNSFGKGQVLDPSVLGQGSMSTRIDYAGIANSSRNKLSKFVGQGQNISGKAPKAEPKQDIKDMKITFDGEPAKLDLPEGQLFFGFPMVLPKEDEESAAGSKSSEQNFQGQGISLRKSNKRKTKSDHDSSKSKAPKSPEVIEID</sequence>
<feature type="chain" id="PRO_0000194989" description="Ubiquitin fusion degradation protein 1">
    <location>
        <begin position="1"/>
        <end position="361"/>
    </location>
</feature>
<feature type="region of interest" description="Monoubiquitin-binding">
    <location>
        <begin position="27"/>
        <end position="28"/>
    </location>
</feature>
<feature type="region of interest" description="Monoubiquitin-binding">
    <location>
        <begin position="30"/>
        <end position="32"/>
    </location>
</feature>
<feature type="region of interest" description="Monoubiquitin-binding">
    <location>
        <begin position="99"/>
        <end position="101"/>
    </location>
</feature>
<feature type="region of interest" description="Disordered" evidence="1">
    <location>
        <begin position="310"/>
        <end position="361"/>
    </location>
</feature>
<feature type="compositionally biased region" description="Polar residues" evidence="1">
    <location>
        <begin position="317"/>
        <end position="329"/>
    </location>
</feature>
<feature type="site" description="Monoubiquitin-binding">
    <location>
        <position position="37"/>
    </location>
</feature>
<feature type="site" description="Monoubiquitin-binding">
    <location>
        <position position="39"/>
    </location>
</feature>
<feature type="site" description="Monoubiquitin-binding">
    <location>
        <position position="109"/>
    </location>
</feature>
<feature type="modified residue" description="Phosphoserine" evidence="12 13 14">
    <location>
        <position position="354"/>
    </location>
</feature>
<feature type="mutagenesis site" description="In UFD1-1; grows more slowly." evidence="10">
    <original>V</original>
    <variation>D</variation>
    <location>
        <position position="94"/>
    </location>
</feature>
<feature type="strand" evidence="15">
    <location>
        <begin position="19"/>
        <end position="29"/>
    </location>
</feature>
<feature type="helix" evidence="15">
    <location>
        <begin position="30"/>
        <end position="32"/>
    </location>
</feature>
<feature type="turn" evidence="15">
    <location>
        <begin position="35"/>
        <end position="37"/>
    </location>
</feature>
<feature type="helix" evidence="15">
    <location>
        <begin position="40"/>
        <end position="44"/>
    </location>
</feature>
<feature type="strand" evidence="15">
    <location>
        <begin position="45"/>
        <end position="50"/>
    </location>
</feature>
<feature type="helix" evidence="15">
    <location>
        <begin position="52"/>
        <end position="60"/>
    </location>
</feature>
<feature type="strand" evidence="15">
    <location>
        <begin position="69"/>
        <end position="72"/>
    </location>
</feature>
<feature type="turn" evidence="15">
    <location>
        <begin position="74"/>
        <end position="76"/>
    </location>
</feature>
<feature type="strand" evidence="15">
    <location>
        <begin position="79"/>
        <end position="87"/>
    </location>
</feature>
<feature type="strand" evidence="15">
    <location>
        <begin position="93"/>
        <end position="96"/>
    </location>
</feature>
<feature type="helix" evidence="15">
    <location>
        <begin position="98"/>
        <end position="104"/>
    </location>
</feature>
<feature type="strand" evidence="15">
    <location>
        <begin position="111"/>
        <end position="118"/>
    </location>
</feature>
<feature type="strand" evidence="15">
    <location>
        <begin position="123"/>
        <end position="128"/>
    </location>
</feature>
<feature type="helix" evidence="15">
    <location>
        <begin position="131"/>
        <end position="135"/>
    </location>
</feature>
<feature type="helix" evidence="15">
    <location>
        <begin position="140"/>
        <end position="150"/>
    </location>
</feature>
<feature type="strand" evidence="15">
    <location>
        <begin position="154"/>
        <end position="164"/>
    </location>
</feature>
<feature type="strand" evidence="15">
    <location>
        <begin position="167"/>
        <end position="177"/>
    </location>
</feature>
<feature type="strand" evidence="15">
    <location>
        <begin position="188"/>
        <end position="190"/>
    </location>
</feature>
<feature type="strand" evidence="15">
    <location>
        <begin position="192"/>
        <end position="196"/>
    </location>
</feature>
<feature type="turn" evidence="17">
    <location>
        <begin position="231"/>
        <end position="234"/>
    </location>
</feature>
<feature type="turn" evidence="17">
    <location>
        <begin position="237"/>
        <end position="243"/>
    </location>
</feature>
<feature type="helix" evidence="17">
    <location>
        <begin position="244"/>
        <end position="252"/>
    </location>
</feature>
<feature type="helix" evidence="19">
    <location>
        <begin position="254"/>
        <end position="256"/>
    </location>
</feature>
<feature type="strand" evidence="18">
    <location>
        <begin position="285"/>
        <end position="287"/>
    </location>
</feature>
<feature type="strand" evidence="16">
    <location>
        <begin position="298"/>
        <end position="300"/>
    </location>
</feature>
<keyword id="KW-0002">3D-structure</keyword>
<keyword id="KW-0597">Phosphoprotein</keyword>
<keyword id="KW-1185">Reference proteome</keyword>
<keyword id="KW-0833">Ubl conjugation pathway</keyword>
<organism>
    <name type="scientific">Saccharomyces cerevisiae (strain ATCC 204508 / S288c)</name>
    <name type="common">Baker's yeast</name>
    <dbReference type="NCBI Taxonomy" id="559292"/>
    <lineage>
        <taxon>Eukaryota</taxon>
        <taxon>Fungi</taxon>
        <taxon>Dikarya</taxon>
        <taxon>Ascomycota</taxon>
        <taxon>Saccharomycotina</taxon>
        <taxon>Saccharomycetes</taxon>
        <taxon>Saccharomycetales</taxon>
        <taxon>Saccharomycetaceae</taxon>
        <taxon>Saccharomyces</taxon>
    </lineage>
</organism>
<dbReference type="EMBL" id="U22153">
    <property type="protein sequence ID" value="AAC49023.1"/>
    <property type="molecule type" value="Genomic_DNA"/>
</dbReference>
<dbReference type="EMBL" id="U17264">
    <property type="protein sequence ID" value="AAB46627.1"/>
    <property type="molecule type" value="Genomic_DNA"/>
</dbReference>
<dbReference type="EMBL" id="DQ115391">
    <property type="protein sequence ID" value="AAZ22463.1"/>
    <property type="molecule type" value="Genomic_DNA"/>
</dbReference>
<dbReference type="EMBL" id="Z72833">
    <property type="protein sequence ID" value="CAA97047.1"/>
    <property type="molecule type" value="Genomic_DNA"/>
</dbReference>
<dbReference type="EMBL" id="AY692806">
    <property type="protein sequence ID" value="AAT92825.1"/>
    <property type="molecule type" value="Genomic_DNA"/>
</dbReference>
<dbReference type="EMBL" id="BK006941">
    <property type="protein sequence ID" value="DAA08146.1"/>
    <property type="molecule type" value="Genomic_DNA"/>
</dbReference>
<dbReference type="PIR" id="S59814">
    <property type="entry name" value="S59814"/>
</dbReference>
<dbReference type="RefSeq" id="NP_011562.1">
    <property type="nucleotide sequence ID" value="NM_001181177.1"/>
</dbReference>
<dbReference type="PDB" id="1ZC1">
    <property type="method" value="NMR"/>
    <property type="chains" value="A=1-208"/>
</dbReference>
<dbReference type="PDB" id="6JWJ">
    <property type="method" value="X-ray"/>
    <property type="resolution" value="1.58 A"/>
    <property type="chains" value="C=288-305"/>
</dbReference>
<dbReference type="PDB" id="8DAR">
    <property type="method" value="EM"/>
    <property type="resolution" value="3.00 A"/>
    <property type="chains" value="H=1-361"/>
</dbReference>
<dbReference type="PDB" id="8DAS">
    <property type="method" value="EM"/>
    <property type="resolution" value="3.50 A"/>
    <property type="chains" value="H=1-361"/>
</dbReference>
<dbReference type="PDB" id="8DAT">
    <property type="method" value="EM"/>
    <property type="resolution" value="3.80 A"/>
    <property type="chains" value="H=1-361"/>
</dbReference>
<dbReference type="PDB" id="8DAU">
    <property type="method" value="EM"/>
    <property type="resolution" value="3.70 A"/>
    <property type="chains" value="H=1-361"/>
</dbReference>
<dbReference type="PDB" id="8DAV">
    <property type="method" value="EM"/>
    <property type="resolution" value="3.50 A"/>
    <property type="chains" value="H=1-361"/>
</dbReference>
<dbReference type="PDB" id="8DAW">
    <property type="method" value="EM"/>
    <property type="resolution" value="3.60 A"/>
    <property type="chains" value="H=1-361"/>
</dbReference>
<dbReference type="PDBsum" id="1ZC1"/>
<dbReference type="PDBsum" id="6JWJ"/>
<dbReference type="PDBsum" id="8DAR"/>
<dbReference type="PDBsum" id="8DAS"/>
<dbReference type="PDBsum" id="8DAT"/>
<dbReference type="PDBsum" id="8DAU"/>
<dbReference type="PDBsum" id="8DAV"/>
<dbReference type="PDBsum" id="8DAW"/>
<dbReference type="BMRB" id="P53044"/>
<dbReference type="EMDB" id="EMD-27273"/>
<dbReference type="EMDB" id="EMD-27274"/>
<dbReference type="EMDB" id="EMD-27275"/>
<dbReference type="EMDB" id="EMD-27276"/>
<dbReference type="EMDB" id="EMD-27277"/>
<dbReference type="EMDB" id="EMD-27278"/>
<dbReference type="SMR" id="P53044"/>
<dbReference type="BioGRID" id="33295">
    <property type="interactions" value="205"/>
</dbReference>
<dbReference type="ComplexPortal" id="CPX-2946">
    <property type="entry name" value="CDC48-NPL4-UFD1 AAA ATPase complex"/>
</dbReference>
<dbReference type="ComplexPortal" id="CPX-3265">
    <property type="entry name" value="Ribosome quality control complex"/>
</dbReference>
<dbReference type="DIP" id="DIP-1476N"/>
<dbReference type="FunCoup" id="P53044">
    <property type="interactions" value="1279"/>
</dbReference>
<dbReference type="IntAct" id="P53044">
    <property type="interactions" value="25"/>
</dbReference>
<dbReference type="MINT" id="P53044"/>
<dbReference type="STRING" id="4932.YGR048W"/>
<dbReference type="CarbonylDB" id="P53044"/>
<dbReference type="iPTMnet" id="P53044"/>
<dbReference type="PaxDb" id="4932-YGR048W"/>
<dbReference type="PeptideAtlas" id="P53044"/>
<dbReference type="EnsemblFungi" id="YGR048W_mRNA">
    <property type="protein sequence ID" value="YGR048W"/>
    <property type="gene ID" value="YGR048W"/>
</dbReference>
<dbReference type="GeneID" id="852939"/>
<dbReference type="KEGG" id="sce:YGR048W"/>
<dbReference type="AGR" id="SGD:S000003280"/>
<dbReference type="SGD" id="S000003280">
    <property type="gene designation" value="UFD1"/>
</dbReference>
<dbReference type="VEuPathDB" id="FungiDB:YGR048W"/>
<dbReference type="eggNOG" id="KOG1816">
    <property type="taxonomic scope" value="Eukaryota"/>
</dbReference>
<dbReference type="GeneTree" id="ENSGT00390000002408"/>
<dbReference type="HOGENOM" id="CLU_037790_1_0_1"/>
<dbReference type="InParanoid" id="P53044"/>
<dbReference type="OMA" id="VCMIETD"/>
<dbReference type="OrthoDB" id="422728at2759"/>
<dbReference type="BioCyc" id="YEAST:G3O-30766-MONOMER"/>
<dbReference type="Reactome" id="R-SCE-110320">
    <property type="pathway name" value="Translesion Synthesis by POLH"/>
</dbReference>
<dbReference type="Reactome" id="R-SCE-8951664">
    <property type="pathway name" value="Neddylation"/>
</dbReference>
<dbReference type="Reactome" id="R-SCE-9755511">
    <property type="pathway name" value="KEAP1-NFE2L2 pathway"/>
</dbReference>
<dbReference type="BioGRID-ORCS" id="852939">
    <property type="hits" value="4 hits in 10 CRISPR screens"/>
</dbReference>
<dbReference type="EvolutionaryTrace" id="P53044"/>
<dbReference type="PRO" id="PR:P53044"/>
<dbReference type="Proteomes" id="UP000002311">
    <property type="component" value="Chromosome VII"/>
</dbReference>
<dbReference type="RNAct" id="P53044">
    <property type="molecule type" value="protein"/>
</dbReference>
<dbReference type="GO" id="GO:0005829">
    <property type="term" value="C:cytosol"/>
    <property type="evidence" value="ECO:0007005"/>
    <property type="project" value="SGD"/>
</dbReference>
<dbReference type="GO" id="GO:0000837">
    <property type="term" value="C:Doa10p ubiquitin ligase complex"/>
    <property type="evidence" value="ECO:0000314"/>
    <property type="project" value="SGD"/>
</dbReference>
<dbReference type="GO" id="GO:0000839">
    <property type="term" value="C:Hrd1p ubiquitin ligase ERAD-L complex"/>
    <property type="evidence" value="ECO:0000314"/>
    <property type="project" value="SGD"/>
</dbReference>
<dbReference type="GO" id="GO:0005634">
    <property type="term" value="C:nucleus"/>
    <property type="evidence" value="ECO:0000314"/>
    <property type="project" value="SGD"/>
</dbReference>
<dbReference type="GO" id="GO:0030894">
    <property type="term" value="C:replisome"/>
    <property type="evidence" value="ECO:0000314"/>
    <property type="project" value="SGD"/>
</dbReference>
<dbReference type="GO" id="GO:1990112">
    <property type="term" value="C:RQC complex"/>
    <property type="evidence" value="ECO:0000314"/>
    <property type="project" value="SGD"/>
</dbReference>
<dbReference type="GO" id="GO:0034098">
    <property type="term" value="C:VCP-NPL4-UFD1 AAA ATPase complex"/>
    <property type="evidence" value="ECO:0000314"/>
    <property type="project" value="SGD"/>
</dbReference>
<dbReference type="GO" id="GO:0031593">
    <property type="term" value="F:polyubiquitin modification-dependent protein binding"/>
    <property type="evidence" value="ECO:0000314"/>
    <property type="project" value="SGD"/>
</dbReference>
<dbReference type="GO" id="GO:0043130">
    <property type="term" value="F:ubiquitin binding"/>
    <property type="evidence" value="ECO:0000314"/>
    <property type="project" value="SGD"/>
</dbReference>
<dbReference type="GO" id="GO:0071629">
    <property type="term" value="P:cytoplasm protein quality control by the ubiquitin-proteasome system"/>
    <property type="evidence" value="ECO:0000315"/>
    <property type="project" value="SGD"/>
</dbReference>
<dbReference type="GO" id="GO:0006274">
    <property type="term" value="P:DNA replication termination"/>
    <property type="evidence" value="ECO:0000314"/>
    <property type="project" value="SGD"/>
</dbReference>
<dbReference type="GO" id="GO:0036503">
    <property type="term" value="P:ERAD pathway"/>
    <property type="evidence" value="ECO:0000314"/>
    <property type="project" value="ComplexPortal"/>
</dbReference>
<dbReference type="GO" id="GO:0072671">
    <property type="term" value="P:mitochondria-associated ubiquitin-dependent protein catabolic process"/>
    <property type="evidence" value="ECO:0000315"/>
    <property type="project" value="UniProtKB"/>
</dbReference>
<dbReference type="GO" id="GO:0070651">
    <property type="term" value="P:nonfunctional rRNA decay"/>
    <property type="evidence" value="ECO:0000315"/>
    <property type="project" value="SGD"/>
</dbReference>
<dbReference type="GO" id="GO:1900182">
    <property type="term" value="P:positive regulation of protein localization to nucleus"/>
    <property type="evidence" value="ECO:0000315"/>
    <property type="project" value="SGD"/>
</dbReference>
<dbReference type="GO" id="GO:0043161">
    <property type="term" value="P:proteasome-mediated ubiquitin-dependent protein catabolic process"/>
    <property type="evidence" value="ECO:0000315"/>
    <property type="project" value="SGD"/>
</dbReference>
<dbReference type="GO" id="GO:0072665">
    <property type="term" value="P:protein localization to vacuole"/>
    <property type="evidence" value="ECO:0000315"/>
    <property type="project" value="SGD"/>
</dbReference>
<dbReference type="GO" id="GO:0072344">
    <property type="term" value="P:rescue of stalled ribosome"/>
    <property type="evidence" value="ECO:0000303"/>
    <property type="project" value="ComplexPortal"/>
</dbReference>
<dbReference type="GO" id="GO:0030970">
    <property type="term" value="P:retrograde protein transport, ER to cytosol"/>
    <property type="evidence" value="ECO:0000315"/>
    <property type="project" value="SGD"/>
</dbReference>
<dbReference type="GO" id="GO:1990116">
    <property type="term" value="P:ribosome-associated ubiquitin-dependent protein catabolic process"/>
    <property type="evidence" value="ECO:0000315"/>
    <property type="project" value="SGD"/>
</dbReference>
<dbReference type="FunFam" id="2.40.40.50:FF:000001">
    <property type="entry name" value="Ubiquitin fusion degradation protein 1 homolog"/>
    <property type="match status" value="1"/>
</dbReference>
<dbReference type="FunFam" id="3.10.330.10:FF:000002">
    <property type="entry name" value="ubiquitin fusion degradation protein 1 homolog"/>
    <property type="match status" value="1"/>
</dbReference>
<dbReference type="Gene3D" id="3.10.330.10">
    <property type="match status" value="1"/>
</dbReference>
<dbReference type="Gene3D" id="2.40.40.50">
    <property type="entry name" value="Ubiquitin fusion degradation protein UFD1, N-terminal domain"/>
    <property type="match status" value="1"/>
</dbReference>
<dbReference type="IDEAL" id="IID50028"/>
<dbReference type="InterPro" id="IPR004854">
    <property type="entry name" value="Ufd1-like"/>
</dbReference>
<dbReference type="InterPro" id="IPR042299">
    <property type="entry name" value="Ufd1-like_Nn"/>
</dbReference>
<dbReference type="InterPro" id="IPR055417">
    <property type="entry name" value="UFD1_N1"/>
</dbReference>
<dbReference type="InterPro" id="IPR055418">
    <property type="entry name" value="UFD1_N2"/>
</dbReference>
<dbReference type="PANTHER" id="PTHR12555">
    <property type="entry name" value="UBIQUITIN FUSION DEGRADATON PROTEIN 1"/>
    <property type="match status" value="1"/>
</dbReference>
<dbReference type="PANTHER" id="PTHR12555:SF13">
    <property type="entry name" value="UBIQUITIN RECOGNITION FACTOR IN ER-ASSOCIATED DEGRADATION PROTEIN 1"/>
    <property type="match status" value="1"/>
</dbReference>
<dbReference type="Pfam" id="PF03152">
    <property type="entry name" value="UFD1_N1"/>
    <property type="match status" value="1"/>
</dbReference>
<dbReference type="Pfam" id="PF24842">
    <property type="entry name" value="UFD1_N2"/>
    <property type="match status" value="1"/>
</dbReference>
<gene>
    <name type="primary">UFD1</name>
    <name type="synonym">PIP3</name>
    <name type="ordered locus">YGR048W</name>
</gene>
<name>UFD1_YEAST</name>
<protein>
    <recommendedName>
        <fullName>Ubiquitin fusion degradation protein 1</fullName>
        <shortName>UB fusion protein 1</shortName>
    </recommendedName>
    <alternativeName>
        <fullName>Polymerase-interacting protein 3</fullName>
    </alternativeName>
</protein>
<evidence type="ECO:0000256" key="1">
    <source>
        <dbReference type="SAM" id="MobiDB-lite"/>
    </source>
</evidence>
<evidence type="ECO:0000269" key="2">
    <source>
    </source>
</evidence>
<evidence type="ECO:0000269" key="3">
    <source>
    </source>
</evidence>
<evidence type="ECO:0000269" key="4">
    <source>
    </source>
</evidence>
<evidence type="ECO:0000269" key="5">
    <source>
    </source>
</evidence>
<evidence type="ECO:0000269" key="6">
    <source>
    </source>
</evidence>
<evidence type="ECO:0000269" key="7">
    <source>
    </source>
</evidence>
<evidence type="ECO:0000269" key="8">
    <source>
    </source>
</evidence>
<evidence type="ECO:0000269" key="9">
    <source>
    </source>
</evidence>
<evidence type="ECO:0000269" key="10">
    <source>
    </source>
</evidence>
<evidence type="ECO:0000305" key="11"/>
<evidence type="ECO:0007744" key="12">
    <source>
    </source>
</evidence>
<evidence type="ECO:0007744" key="13">
    <source>
    </source>
</evidence>
<evidence type="ECO:0007744" key="14">
    <source>
    </source>
</evidence>
<evidence type="ECO:0007829" key="15">
    <source>
        <dbReference type="PDB" id="1ZC1"/>
    </source>
</evidence>
<evidence type="ECO:0007829" key="16">
    <source>
        <dbReference type="PDB" id="6JWJ"/>
    </source>
</evidence>
<evidence type="ECO:0007829" key="17">
    <source>
        <dbReference type="PDB" id="8DAR"/>
    </source>
</evidence>
<evidence type="ECO:0007829" key="18">
    <source>
        <dbReference type="PDB" id="8DAS"/>
    </source>
</evidence>
<evidence type="ECO:0007829" key="19">
    <source>
        <dbReference type="PDB" id="8DAV"/>
    </source>
</evidence>
<comment type="function">
    <text evidence="3 4 5 7">Functions at a post-ubiquitation step in the ubiquitin fusion degradation (UFD) pathway. Has a role in the endoplasmic reticulum-associated degradation (ERAD) pathway. Required for the proteasome-dependent processing/activation of MGA2 and SPT23 transcription factors leading to the subsequent expression of OLE1. Has an additional role in the turnover of OLE1 where it targets ubiquitinated OLE1 and other proteins to the ERAD.</text>
</comment>
<comment type="subunit">
    <text evidence="2 3 8 9">Component of the heterotrimeric CDC48-NPL4-UFD1 ATPase complex (PubMed:16873066). The CDC48-NPL4-UFD1 ATPase complex interacts with the HRD1 ubiquitin ligase complex composed of the E3 ligase HRD1, its cofactors HRD3, USA1 and DER1, substrate recruiting factor YOS9 and CDC48-binding protein UBX2 (PubMed:16873066). Interaction between the complexes is mediated by interaction between CDC48-NPL4-UFD1 complex member CDC48 and HRD1 complex member UBX2 (PubMed:16873066). Forms a complex composed of CDC48, NPL4, UFD1, DOA1, SHP1 and deubiquitinase OTU1 (PubMed:16427015). Interacts with NPL4, CDC48 and UBX2 (PubMed:11598205, PubMed:11733065, PubMed:16873066).</text>
</comment>
<comment type="interaction">
    <interactant intactId="EBI-19997">
        <id>P53044</id>
    </interactant>
    <interactant intactId="EBI-4308">
        <id>P25694</id>
        <label>CDC48</label>
    </interactant>
    <organismsDiffer>false</organismsDiffer>
    <experiments>14</experiments>
</comment>
<comment type="interaction">
    <interactant intactId="EBI-19997">
        <id>P53044</id>
    </interactant>
    <interactant intactId="EBI-5761">
        <id>P38307</id>
        <label>DER1</label>
    </interactant>
    <organismsDiffer>false</organismsDiffer>
    <experiments>3</experiments>
</comment>
<comment type="interaction">
    <interactant intactId="EBI-19997">
        <id>P53044</id>
    </interactant>
    <interactant intactId="EBI-12193">
        <id>P33755</id>
        <label>NPL4</label>
    </interactant>
    <organismsDiffer>false</organismsDiffer>
    <experiments>12</experiments>
</comment>
<comment type="interaction">
    <interactant intactId="EBI-19997">
        <id>P53044</id>
    </interactant>
    <interactant intactId="EBI-14719">
        <id>P06778</id>
        <label>RAD52</label>
    </interactant>
    <organismsDiffer>false</organismsDiffer>
    <experiments>4</experiments>
</comment>
<comment type="interaction">
    <interactant intactId="EBI-19997">
        <id>P53044</id>
    </interactant>
    <interactant intactId="EBI-17490">
        <id>Q12306</id>
        <label>SMT3</label>
    </interactant>
    <organismsDiffer>false</organismsDiffer>
    <experiments>3</experiments>
</comment>
<comment type="interaction">
    <interactant intactId="EBI-19997">
        <id>P53044</id>
    </interactant>
    <interactant intactId="EBI-27730">
        <id>Q04228</id>
        <label>UBX2</label>
    </interactant>
    <organismsDiffer>false</organismsDiffer>
    <experiments>6</experiments>
</comment>
<comment type="miscellaneous">
    <text evidence="6">Present with 3530 molecules/cell in log phase SD medium.</text>
</comment>
<comment type="similarity">
    <text evidence="11">Belongs to the UFD1 family.</text>
</comment>
<proteinExistence type="evidence at protein level"/>